<organism>
    <name type="scientific">Pongo abelii</name>
    <name type="common">Sumatran orangutan</name>
    <name type="synonym">Pongo pygmaeus abelii</name>
    <dbReference type="NCBI Taxonomy" id="9601"/>
    <lineage>
        <taxon>Eukaryota</taxon>
        <taxon>Metazoa</taxon>
        <taxon>Chordata</taxon>
        <taxon>Craniata</taxon>
        <taxon>Vertebrata</taxon>
        <taxon>Euteleostomi</taxon>
        <taxon>Mammalia</taxon>
        <taxon>Eutheria</taxon>
        <taxon>Euarchontoglires</taxon>
        <taxon>Primates</taxon>
        <taxon>Haplorrhini</taxon>
        <taxon>Catarrhini</taxon>
        <taxon>Hominidae</taxon>
        <taxon>Pongo</taxon>
    </lineage>
</organism>
<comment type="function">
    <text evidence="2">Involved in the initial and rate-limiting step of peroxisomal beta-oxidation of straight-chain saturated and unsaturated very-long-chain fatty acids. Catalyzes the desaturation of fatty acyl-CoAs such as palmitoyl-CoA (hexadecanoyl-CoA) to 2-trans-enoyl-CoAs ((2E)-enoyl-CoAs) such as (2E)-hexadecenoyl-CoA, and donates electrons directly to molecular oxygen (O(2)), thereby producing hydrogen peroxide (H(2)O(2)).</text>
</comment>
<comment type="function">
    <molecule>Isoform 1</molecule>
    <text evidence="2">Shows highest activity against medium-chain fatty acyl-CoAs. Shows optimum activity with a chain length of 10 carbons (decanoyl-CoA) in vitro.</text>
</comment>
<comment type="function">
    <molecule>Isoform 2</molecule>
    <text evidence="2">Is active against a much broader range of substrates and shows activity towards long-chain acyl-CoAs.</text>
</comment>
<comment type="catalytic activity">
    <reaction evidence="1">
        <text>a 2,3-saturated acyl-CoA + O2 = a (2E)-enoyl-CoA + H2O2</text>
        <dbReference type="Rhea" id="RHEA:38959"/>
        <dbReference type="ChEBI" id="CHEBI:15379"/>
        <dbReference type="ChEBI" id="CHEBI:16240"/>
        <dbReference type="ChEBI" id="CHEBI:58856"/>
        <dbReference type="ChEBI" id="CHEBI:65111"/>
        <dbReference type="EC" id="1.3.3.6"/>
    </reaction>
    <physiologicalReaction direction="left-to-right" evidence="1">
        <dbReference type="Rhea" id="RHEA:38960"/>
    </physiologicalReaction>
</comment>
<comment type="catalytic activity">
    <reaction evidence="2">
        <text>hexadecanoyl-CoA + O2 = (2E)-hexadecenoyl-CoA + H2O2</text>
        <dbReference type="Rhea" id="RHEA:40167"/>
        <dbReference type="ChEBI" id="CHEBI:15379"/>
        <dbReference type="ChEBI" id="CHEBI:16240"/>
        <dbReference type="ChEBI" id="CHEBI:57379"/>
        <dbReference type="ChEBI" id="CHEBI:61526"/>
    </reaction>
    <physiologicalReaction direction="left-to-right" evidence="2">
        <dbReference type="Rhea" id="RHEA:40168"/>
    </physiologicalReaction>
</comment>
<comment type="catalytic activity">
    <reaction evidence="2">
        <text>dodecanoyl-CoA + O2 = (2E)-dodecenoyl-CoA + H2O2</text>
        <dbReference type="Rhea" id="RHEA:40171"/>
        <dbReference type="ChEBI" id="CHEBI:15379"/>
        <dbReference type="ChEBI" id="CHEBI:16240"/>
        <dbReference type="ChEBI" id="CHEBI:57330"/>
        <dbReference type="ChEBI" id="CHEBI:57375"/>
    </reaction>
    <physiologicalReaction direction="left-to-right" evidence="2">
        <dbReference type="Rhea" id="RHEA:40172"/>
    </physiologicalReaction>
</comment>
<comment type="catalytic activity">
    <reaction evidence="2">
        <text>octanoyl-CoA + O2 = (2E)-octenoyl-CoA + H2O2</text>
        <dbReference type="Rhea" id="RHEA:40175"/>
        <dbReference type="ChEBI" id="CHEBI:15379"/>
        <dbReference type="ChEBI" id="CHEBI:16240"/>
        <dbReference type="ChEBI" id="CHEBI:57386"/>
        <dbReference type="ChEBI" id="CHEBI:62242"/>
    </reaction>
    <physiologicalReaction direction="left-to-right" evidence="2">
        <dbReference type="Rhea" id="RHEA:40176"/>
    </physiologicalReaction>
</comment>
<comment type="catalytic activity">
    <reaction evidence="2">
        <text>decanoyl-CoA + O2 = (2E)-decenoyl-CoA + H2O2</text>
        <dbReference type="Rhea" id="RHEA:40179"/>
        <dbReference type="ChEBI" id="CHEBI:15379"/>
        <dbReference type="ChEBI" id="CHEBI:16240"/>
        <dbReference type="ChEBI" id="CHEBI:61406"/>
        <dbReference type="ChEBI" id="CHEBI:61430"/>
    </reaction>
    <physiologicalReaction direction="left-to-right" evidence="2">
        <dbReference type="Rhea" id="RHEA:40180"/>
    </physiologicalReaction>
</comment>
<comment type="catalytic activity">
    <reaction evidence="2">
        <text>tetradecanoyl-CoA + O2 = (2E)-tetradecenoyl-CoA + H2O2</text>
        <dbReference type="Rhea" id="RHEA:40183"/>
        <dbReference type="ChEBI" id="CHEBI:15379"/>
        <dbReference type="ChEBI" id="CHEBI:16240"/>
        <dbReference type="ChEBI" id="CHEBI:57385"/>
        <dbReference type="ChEBI" id="CHEBI:61405"/>
    </reaction>
    <physiologicalReaction direction="left-to-right" evidence="2">
        <dbReference type="Rhea" id="RHEA:40184"/>
    </physiologicalReaction>
</comment>
<comment type="catalytic activity">
    <reaction evidence="2">
        <text>hexadecanedioyl-CoA + O2 = (2E)-hexadecenedioyl-CoA + H2O2</text>
        <dbReference type="Rhea" id="RHEA:40275"/>
        <dbReference type="ChEBI" id="CHEBI:15379"/>
        <dbReference type="ChEBI" id="CHEBI:16240"/>
        <dbReference type="ChEBI" id="CHEBI:77075"/>
        <dbReference type="ChEBI" id="CHEBI:77085"/>
    </reaction>
    <physiologicalReaction direction="left-to-right" evidence="2">
        <dbReference type="Rhea" id="RHEA:40276"/>
    </physiologicalReaction>
</comment>
<comment type="catalytic activity">
    <reaction evidence="1">
        <text>tetracosanoyl-CoA + O2 = (2E)-tetracosenoyl-CoA + H2O2</text>
        <dbReference type="Rhea" id="RHEA:40319"/>
        <dbReference type="ChEBI" id="CHEBI:15379"/>
        <dbReference type="ChEBI" id="CHEBI:16240"/>
        <dbReference type="ChEBI" id="CHEBI:65052"/>
        <dbReference type="ChEBI" id="CHEBI:74693"/>
    </reaction>
    <physiologicalReaction direction="left-to-right" evidence="1">
        <dbReference type="Rhea" id="RHEA:40320"/>
    </physiologicalReaction>
</comment>
<comment type="catalytic activity">
    <reaction evidence="1">
        <text>glutaryl-CoA + O2 = (2E)-glutaconyl-CoA + H2O2</text>
        <dbReference type="Rhea" id="RHEA:40315"/>
        <dbReference type="ChEBI" id="CHEBI:15379"/>
        <dbReference type="ChEBI" id="CHEBI:16240"/>
        <dbReference type="ChEBI" id="CHEBI:57353"/>
        <dbReference type="ChEBI" id="CHEBI:57378"/>
    </reaction>
    <physiologicalReaction direction="left-to-right" evidence="1">
        <dbReference type="Rhea" id="RHEA:40316"/>
    </physiologicalReaction>
</comment>
<comment type="catalytic activity">
    <reaction evidence="1">
        <text>hexanoyl-CoA + O2 = (2E)-hexenoyl-CoA + H2O2</text>
        <dbReference type="Rhea" id="RHEA:40311"/>
        <dbReference type="ChEBI" id="CHEBI:15379"/>
        <dbReference type="ChEBI" id="CHEBI:16240"/>
        <dbReference type="ChEBI" id="CHEBI:62077"/>
        <dbReference type="ChEBI" id="CHEBI:62620"/>
    </reaction>
    <physiologicalReaction direction="left-to-right" evidence="1">
        <dbReference type="Rhea" id="RHEA:40312"/>
    </physiologicalReaction>
</comment>
<comment type="catalytic activity">
    <reaction evidence="1">
        <text>octadecanoyl-CoA + O2 = (2E)-octadecenoyl-CoA + H2O2</text>
        <dbReference type="Rhea" id="RHEA:38971"/>
        <dbReference type="ChEBI" id="CHEBI:15379"/>
        <dbReference type="ChEBI" id="CHEBI:16240"/>
        <dbReference type="ChEBI" id="CHEBI:57394"/>
        <dbReference type="ChEBI" id="CHEBI:71412"/>
    </reaction>
    <physiologicalReaction direction="left-to-right" evidence="1">
        <dbReference type="Rhea" id="RHEA:38972"/>
    </physiologicalReaction>
</comment>
<comment type="catalytic activity">
    <reaction evidence="2">
        <text>(5Z,8Z,11Z,14Z,17Z)-eicosapentaenoyl-CoA + O2 = (2E,5Z,8Z,11Z,14Z,17Z)-icosahexaenoyl-CoA + H2O2</text>
        <dbReference type="Rhea" id="RHEA:69643"/>
        <dbReference type="ChEBI" id="CHEBI:15379"/>
        <dbReference type="ChEBI" id="CHEBI:16240"/>
        <dbReference type="ChEBI" id="CHEBI:73862"/>
        <dbReference type="ChEBI" id="CHEBI:187901"/>
    </reaction>
    <physiologicalReaction direction="left-to-right" evidence="2">
        <dbReference type="Rhea" id="RHEA:69644"/>
    </physiologicalReaction>
</comment>
<comment type="catalytic activity">
    <reaction evidence="3">
        <text>(6Z,9Z,12Z,15Z,18Z,21Z)-tetracosahexaenoyl-CoA + O2 = (2E,6Z,9Z,12Z,15Z,18Z,21Z)-tetracosaheptaenoyl-CoA + H2O2</text>
        <dbReference type="Rhea" id="RHEA:39119"/>
        <dbReference type="ChEBI" id="CHEBI:15379"/>
        <dbReference type="ChEBI" id="CHEBI:16240"/>
        <dbReference type="ChEBI" id="CHEBI:74086"/>
        <dbReference type="ChEBI" id="CHEBI:76360"/>
    </reaction>
    <physiologicalReaction direction="left-to-right" evidence="3">
        <dbReference type="Rhea" id="RHEA:39120"/>
    </physiologicalReaction>
</comment>
<comment type="cofactor">
    <cofactor evidence="2">
        <name>FAD</name>
        <dbReference type="ChEBI" id="CHEBI:57692"/>
    </cofactor>
</comment>
<comment type="pathway">
    <text>Lipid metabolism; peroxisomal fatty acid beta-oxidation.</text>
</comment>
<comment type="subunit">
    <text evidence="1 2">Homodimer (By similarity). Interacts with LONP2 (By similarity).</text>
</comment>
<comment type="subcellular location">
    <subcellularLocation>
        <location evidence="1">Peroxisome</location>
    </subcellularLocation>
</comment>
<comment type="alternative products">
    <event type="alternative splicing"/>
    <isoform>
        <id>Q5RC19-1</id>
        <name>1</name>
        <sequence type="displayed"/>
    </isoform>
    <isoform>
        <id>Q5RC19-2</id>
        <name>2</name>
        <sequence type="described" ref="VSP_013217"/>
    </isoform>
</comment>
<comment type="similarity">
    <text evidence="6">Belongs to the acyl-CoA oxidase family.</text>
</comment>
<name>ACOX1_PONAB</name>
<proteinExistence type="evidence at transcript level"/>
<dbReference type="EC" id="1.3.3.6" evidence="1"/>
<dbReference type="EMBL" id="CR858463">
    <property type="protein sequence ID" value="CAH90691.1"/>
    <property type="molecule type" value="mRNA"/>
</dbReference>
<dbReference type="EMBL" id="CR859802">
    <property type="protein sequence ID" value="CAH91960.1"/>
    <property type="molecule type" value="mRNA"/>
</dbReference>
<dbReference type="RefSeq" id="NP_001125380.1">
    <property type="nucleotide sequence ID" value="NM_001131908.1"/>
</dbReference>
<dbReference type="RefSeq" id="NP_001128843.1">
    <molecule id="Q5RC19-1"/>
    <property type="nucleotide sequence ID" value="NM_001135371.2"/>
</dbReference>
<dbReference type="SMR" id="Q5RC19"/>
<dbReference type="FunCoup" id="Q5RC19">
    <property type="interactions" value="1800"/>
</dbReference>
<dbReference type="STRING" id="9601.ENSPPYP00000009707"/>
<dbReference type="Ensembl" id="ENSPPYT00000010093.2">
    <molecule id="Q5RC19-2"/>
    <property type="protein sequence ID" value="ENSPPYP00000009707.2"/>
    <property type="gene ID" value="ENSPPYG00000008645.3"/>
</dbReference>
<dbReference type="Ensembl" id="ENSPPYT00000052938.1">
    <molecule id="Q5RC19-1"/>
    <property type="protein sequence ID" value="ENSPPYP00000030176.1"/>
    <property type="gene ID" value="ENSPPYG00000008645.3"/>
</dbReference>
<dbReference type="GeneID" id="100172283"/>
<dbReference type="KEGG" id="pon:100172283"/>
<dbReference type="CTD" id="51"/>
<dbReference type="eggNOG" id="KOG0136">
    <property type="taxonomic scope" value="Eukaryota"/>
</dbReference>
<dbReference type="GeneTree" id="ENSGT00940000157287"/>
<dbReference type="InParanoid" id="Q5RC19"/>
<dbReference type="OMA" id="AHAQYMV"/>
<dbReference type="OrthoDB" id="538336at2759"/>
<dbReference type="UniPathway" id="UPA00661"/>
<dbReference type="Proteomes" id="UP000001595">
    <property type="component" value="Chromosome 17"/>
</dbReference>
<dbReference type="GO" id="GO:0005782">
    <property type="term" value="C:peroxisomal matrix"/>
    <property type="evidence" value="ECO:0007669"/>
    <property type="project" value="Ensembl"/>
</dbReference>
<dbReference type="GO" id="GO:0005778">
    <property type="term" value="C:peroxisomal membrane"/>
    <property type="evidence" value="ECO:0007669"/>
    <property type="project" value="Ensembl"/>
</dbReference>
<dbReference type="GO" id="GO:0005777">
    <property type="term" value="C:peroxisome"/>
    <property type="evidence" value="ECO:0000250"/>
    <property type="project" value="UniProtKB"/>
</dbReference>
<dbReference type="GO" id="GO:0003997">
    <property type="term" value="F:acyl-CoA oxidase activity"/>
    <property type="evidence" value="ECO:0000250"/>
    <property type="project" value="UniProtKB"/>
</dbReference>
<dbReference type="GO" id="GO:0071949">
    <property type="term" value="F:FAD binding"/>
    <property type="evidence" value="ECO:0007669"/>
    <property type="project" value="InterPro"/>
</dbReference>
<dbReference type="GO" id="GO:0005504">
    <property type="term" value="F:fatty acid binding"/>
    <property type="evidence" value="ECO:0007669"/>
    <property type="project" value="InterPro"/>
</dbReference>
<dbReference type="GO" id="GO:0016401">
    <property type="term" value="F:palmitoyl-CoA oxidase activity"/>
    <property type="evidence" value="ECO:0007669"/>
    <property type="project" value="TreeGrafter"/>
</dbReference>
<dbReference type="GO" id="GO:0030165">
    <property type="term" value="F:PDZ domain binding"/>
    <property type="evidence" value="ECO:0007669"/>
    <property type="project" value="Ensembl"/>
</dbReference>
<dbReference type="GO" id="GO:0042803">
    <property type="term" value="F:protein homodimerization activity"/>
    <property type="evidence" value="ECO:0000250"/>
    <property type="project" value="UniProtKB"/>
</dbReference>
<dbReference type="GO" id="GO:0036109">
    <property type="term" value="P:alpha-linolenic acid metabolic process"/>
    <property type="evidence" value="ECO:0007669"/>
    <property type="project" value="Ensembl"/>
</dbReference>
<dbReference type="GO" id="GO:0009062">
    <property type="term" value="P:fatty acid catabolic process"/>
    <property type="evidence" value="ECO:0000250"/>
    <property type="project" value="UniProtKB"/>
</dbReference>
<dbReference type="GO" id="GO:1901570">
    <property type="term" value="P:fatty acid derivative biosynthetic process"/>
    <property type="evidence" value="ECO:0007669"/>
    <property type="project" value="Ensembl"/>
</dbReference>
<dbReference type="GO" id="GO:0019395">
    <property type="term" value="P:fatty acid oxidation"/>
    <property type="evidence" value="ECO:0000250"/>
    <property type="project" value="UniProtKB"/>
</dbReference>
<dbReference type="GO" id="GO:0006091">
    <property type="term" value="P:generation of precursor metabolites and energy"/>
    <property type="evidence" value="ECO:0000250"/>
    <property type="project" value="UniProtKB"/>
</dbReference>
<dbReference type="GO" id="GO:0050665">
    <property type="term" value="P:hydrogen peroxide biosynthetic process"/>
    <property type="evidence" value="ECO:0000250"/>
    <property type="project" value="UniProtKB"/>
</dbReference>
<dbReference type="GO" id="GO:0055088">
    <property type="term" value="P:lipid homeostasis"/>
    <property type="evidence" value="ECO:0007669"/>
    <property type="project" value="TreeGrafter"/>
</dbReference>
<dbReference type="GO" id="GO:0006629">
    <property type="term" value="P:lipid metabolic process"/>
    <property type="evidence" value="ECO:0000250"/>
    <property type="project" value="UniProtKB"/>
</dbReference>
<dbReference type="GO" id="GO:0042759">
    <property type="term" value="P:long-chain fatty acid biosynthetic process"/>
    <property type="evidence" value="ECO:0007669"/>
    <property type="project" value="Ensembl"/>
</dbReference>
<dbReference type="GO" id="GO:0006693">
    <property type="term" value="P:prostaglandin metabolic process"/>
    <property type="evidence" value="ECO:0000250"/>
    <property type="project" value="UniProtKB"/>
</dbReference>
<dbReference type="GO" id="GO:0007283">
    <property type="term" value="P:spermatogenesis"/>
    <property type="evidence" value="ECO:0007669"/>
    <property type="project" value="Ensembl"/>
</dbReference>
<dbReference type="GO" id="GO:0006636">
    <property type="term" value="P:unsaturated fatty acid biosynthetic process"/>
    <property type="evidence" value="ECO:0007669"/>
    <property type="project" value="Ensembl"/>
</dbReference>
<dbReference type="GO" id="GO:0140493">
    <property type="term" value="P:very long-chain fatty acid beta-oxidation"/>
    <property type="evidence" value="ECO:0000250"/>
    <property type="project" value="UniProtKB"/>
</dbReference>
<dbReference type="CDD" id="cd01150">
    <property type="entry name" value="AXO"/>
    <property type="match status" value="1"/>
</dbReference>
<dbReference type="FunFam" id="1.10.540.10:FF:000006">
    <property type="entry name" value="Acyl-coenzyme A oxidase"/>
    <property type="match status" value="1"/>
</dbReference>
<dbReference type="FunFam" id="1.20.140.10:FF:000005">
    <property type="entry name" value="Acyl-coenzyme A oxidase"/>
    <property type="match status" value="1"/>
</dbReference>
<dbReference type="FunFam" id="1.20.140.10:FF:000007">
    <property type="entry name" value="Acyl-coenzyme A oxidase"/>
    <property type="match status" value="1"/>
</dbReference>
<dbReference type="FunFam" id="2.40.110.10:FF:000003">
    <property type="entry name" value="Acyl-coenzyme A oxidase"/>
    <property type="match status" value="1"/>
</dbReference>
<dbReference type="Gene3D" id="1.10.540.10">
    <property type="entry name" value="Acyl-CoA dehydrogenase/oxidase, N-terminal domain"/>
    <property type="match status" value="1"/>
</dbReference>
<dbReference type="Gene3D" id="2.40.110.10">
    <property type="entry name" value="Butyryl-CoA Dehydrogenase, subunit A, domain 2"/>
    <property type="match status" value="1"/>
</dbReference>
<dbReference type="Gene3D" id="1.20.140.10">
    <property type="entry name" value="Butyryl-CoA Dehydrogenase, subunit A, domain 3"/>
    <property type="match status" value="2"/>
</dbReference>
<dbReference type="InterPro" id="IPR034171">
    <property type="entry name" value="ACO"/>
</dbReference>
<dbReference type="InterPro" id="IPR055060">
    <property type="entry name" value="ACOX_C_alpha1"/>
</dbReference>
<dbReference type="InterPro" id="IPR029320">
    <property type="entry name" value="Acyl-CoA_ox_N"/>
</dbReference>
<dbReference type="InterPro" id="IPR006091">
    <property type="entry name" value="Acyl-CoA_Oxase/DH_mid-dom"/>
</dbReference>
<dbReference type="InterPro" id="IPR046373">
    <property type="entry name" value="Acyl-CoA_Oxase/DH_mid-dom_sf"/>
</dbReference>
<dbReference type="InterPro" id="IPR012258">
    <property type="entry name" value="Acyl-CoA_oxidase"/>
</dbReference>
<dbReference type="InterPro" id="IPR002655">
    <property type="entry name" value="Acyl-CoA_oxidase_C"/>
</dbReference>
<dbReference type="InterPro" id="IPR036250">
    <property type="entry name" value="AcylCo_DH-like_C"/>
</dbReference>
<dbReference type="InterPro" id="IPR037069">
    <property type="entry name" value="AcylCoA_DH/ox_N_sf"/>
</dbReference>
<dbReference type="InterPro" id="IPR009100">
    <property type="entry name" value="AcylCoA_DH/oxidase_NM_dom_sf"/>
</dbReference>
<dbReference type="PANTHER" id="PTHR10909">
    <property type="entry name" value="ELECTRON TRANSPORT OXIDOREDUCTASE"/>
    <property type="match status" value="1"/>
</dbReference>
<dbReference type="PANTHER" id="PTHR10909:SF250">
    <property type="entry name" value="PEROXISOMAL ACYL-COENZYME A OXIDASE 1"/>
    <property type="match status" value="1"/>
</dbReference>
<dbReference type="Pfam" id="PF01756">
    <property type="entry name" value="ACOX"/>
    <property type="match status" value="1"/>
</dbReference>
<dbReference type="Pfam" id="PF22924">
    <property type="entry name" value="ACOX_C_alpha1"/>
    <property type="match status" value="1"/>
</dbReference>
<dbReference type="Pfam" id="PF02770">
    <property type="entry name" value="Acyl-CoA_dh_M"/>
    <property type="match status" value="1"/>
</dbReference>
<dbReference type="Pfam" id="PF14749">
    <property type="entry name" value="Acyl-CoA_ox_N"/>
    <property type="match status" value="1"/>
</dbReference>
<dbReference type="PIRSF" id="PIRSF000168">
    <property type="entry name" value="Acyl-CoA_oxidase"/>
    <property type="match status" value="1"/>
</dbReference>
<dbReference type="SUPFAM" id="SSF47203">
    <property type="entry name" value="Acyl-CoA dehydrogenase C-terminal domain-like"/>
    <property type="match status" value="2"/>
</dbReference>
<dbReference type="SUPFAM" id="SSF56645">
    <property type="entry name" value="Acyl-CoA dehydrogenase NM domain-like"/>
    <property type="match status" value="1"/>
</dbReference>
<reference key="1">
    <citation type="submission" date="2004-11" db="EMBL/GenBank/DDBJ databases">
        <authorList>
            <consortium name="The German cDNA consortium"/>
        </authorList>
    </citation>
    <scope>NUCLEOTIDE SEQUENCE [LARGE SCALE MRNA] (ISOFORMS 1 AND 2)</scope>
    <source>
        <tissue>Heart</tissue>
        <tissue>Kidney</tissue>
    </source>
</reference>
<evidence type="ECO:0000250" key="1">
    <source>
        <dbReference type="UniProtKB" id="P07872"/>
    </source>
</evidence>
<evidence type="ECO:0000250" key="2">
    <source>
        <dbReference type="UniProtKB" id="Q15067"/>
    </source>
</evidence>
<evidence type="ECO:0000250" key="3">
    <source>
        <dbReference type="UniProtKB" id="Q9R0H0"/>
    </source>
</evidence>
<evidence type="ECO:0000255" key="4"/>
<evidence type="ECO:0000303" key="5">
    <source ref="1"/>
</evidence>
<evidence type="ECO:0000305" key="6"/>
<protein>
    <recommendedName>
        <fullName evidence="2">Peroxisomal acyl-coenzyme A oxidase 1</fullName>
        <shortName evidence="2">AOX</shortName>
        <ecNumber evidence="1">1.3.3.6</ecNumber>
    </recommendedName>
    <alternativeName>
        <fullName evidence="2">Palmitoyl-CoA oxidase</fullName>
    </alternativeName>
    <alternativeName>
        <fullName>Peroxisomal fatty acyl-CoA oxidase</fullName>
    </alternativeName>
    <alternativeName>
        <fullName>Straight-chain acyl-CoA oxidase</fullName>
    </alternativeName>
    <component>
        <recommendedName>
            <fullName evidence="1">Peroxisomal acyl-CoA oxidase 1, A chain</fullName>
        </recommendedName>
    </component>
    <component>
        <recommendedName>
            <fullName evidence="1">Peroxisomal acyl-CoA oxidase 1, B chain</fullName>
        </recommendedName>
    </component>
    <component>
        <recommendedName>
            <fullName evidence="1">Peroxisomal acyl-CoA oxidase 1, C chain</fullName>
        </recommendedName>
    </component>
</protein>
<keyword id="KW-0007">Acetylation</keyword>
<keyword id="KW-0025">Alternative splicing</keyword>
<keyword id="KW-0274">FAD</keyword>
<keyword id="KW-0276">Fatty acid metabolism</keyword>
<keyword id="KW-0285">Flavoprotein</keyword>
<keyword id="KW-0443">Lipid metabolism</keyword>
<keyword id="KW-0560">Oxidoreductase</keyword>
<keyword id="KW-0576">Peroxisome</keyword>
<keyword id="KW-0597">Phosphoprotein</keyword>
<keyword id="KW-1185">Reference proteome</keyword>
<feature type="chain" id="PRO_0000204680" description="Peroxisomal acyl-CoA oxidase 1, A chain">
    <location>
        <begin position="1"/>
        <end position="660"/>
    </location>
</feature>
<feature type="chain" id="PRO_0000447504" description="Peroxisomal acyl-CoA oxidase 1, B chain" evidence="1">
    <location>
        <begin position="1"/>
        <end position="438"/>
    </location>
</feature>
<feature type="chain" id="PRO_0000447505" description="Peroxisomal acyl-CoA oxidase 1, C chain" evidence="1">
    <location>
        <begin position="439"/>
        <end position="660"/>
    </location>
</feature>
<feature type="short sequence motif" description="Microbody targeting signal" evidence="4">
    <location>
        <begin position="658"/>
        <end position="660"/>
    </location>
</feature>
<feature type="active site" description="Proton acceptor" evidence="1">
    <location>
        <position position="421"/>
    </location>
</feature>
<feature type="binding site" evidence="1">
    <location>
        <position position="139"/>
    </location>
    <ligand>
        <name>FAD</name>
        <dbReference type="ChEBI" id="CHEBI:57692"/>
    </ligand>
</feature>
<feature type="binding site" evidence="1">
    <location>
        <position position="178"/>
    </location>
    <ligand>
        <name>FAD</name>
        <dbReference type="ChEBI" id="CHEBI:57692"/>
    </ligand>
</feature>
<feature type="site" description="Cleavage" evidence="1">
    <location>
        <begin position="468"/>
        <end position="469"/>
    </location>
</feature>
<feature type="modified residue" description="Phosphoserine" evidence="2">
    <location>
        <position position="26"/>
    </location>
</feature>
<feature type="modified residue" description="N6-succinyllysine" evidence="3">
    <location>
        <position position="89"/>
    </location>
</feature>
<feature type="modified residue" description="N6-succinyllysine" evidence="3">
    <location>
        <position position="90"/>
    </location>
</feature>
<feature type="modified residue" description="N6-acetyllysine" evidence="3">
    <location>
        <position position="216"/>
    </location>
</feature>
<feature type="modified residue" description="N6-succinyllysine" evidence="3">
    <location>
        <position position="241"/>
    </location>
</feature>
<feature type="modified residue" description="N6-acetyllysine" evidence="2">
    <location>
        <position position="255"/>
    </location>
</feature>
<feature type="modified residue" description="N6-acetyllysine" evidence="2">
    <location>
        <position position="267"/>
    </location>
</feature>
<feature type="modified residue" description="N6-acetyllysine" evidence="3">
    <location>
        <position position="272"/>
    </location>
</feature>
<feature type="modified residue" description="N6-succinyllysine" evidence="3">
    <location>
        <position position="349"/>
    </location>
</feature>
<feature type="modified residue" description="N6-acetyllysine; alternate" evidence="2">
    <location>
        <position position="437"/>
    </location>
</feature>
<feature type="modified residue" description="N6-succinyllysine; alternate" evidence="3">
    <location>
        <position position="437"/>
    </location>
</feature>
<feature type="modified residue" description="N6-acetyllysine; alternate" evidence="3">
    <location>
        <position position="446"/>
    </location>
</feature>
<feature type="modified residue" description="N6-succinyllysine; alternate" evidence="3">
    <location>
        <position position="446"/>
    </location>
</feature>
<feature type="modified residue" description="N6-acetyllysine" evidence="2">
    <location>
        <position position="500"/>
    </location>
</feature>
<feature type="modified residue" description="N6-acetyllysine; alternate" evidence="3">
    <location>
        <position position="512"/>
    </location>
</feature>
<feature type="modified residue" description="N6-succinyllysine; alternate" evidence="3">
    <location>
        <position position="512"/>
    </location>
</feature>
<feature type="modified residue" description="N6-succinyllysine" evidence="3">
    <location>
        <position position="542"/>
    </location>
</feature>
<feature type="modified residue" description="N6-acetyllysine; alternate" evidence="3">
    <location>
        <position position="637"/>
    </location>
</feature>
<feature type="modified residue" description="N6-succinyllysine; alternate" evidence="3">
    <location>
        <position position="637"/>
    </location>
</feature>
<feature type="modified residue" description="N6-succinyllysine" evidence="3">
    <location>
        <position position="643"/>
    </location>
</feature>
<feature type="modified residue" description="Phosphoserine" evidence="3">
    <location>
        <position position="649"/>
    </location>
</feature>
<feature type="modified residue" description="N6-acetyllysine" evidence="3">
    <location>
        <position position="651"/>
    </location>
</feature>
<feature type="modified residue" description="N6-succinyllysine" evidence="3">
    <location>
        <position position="654"/>
    </location>
</feature>
<feature type="splice variant" id="VSP_013217" description="In isoform 2." evidence="5">
    <original>KLHLVNFVEPVGLNYSMFIPTLLNQGTTAQKEKWLLSSKGLQ</original>
    <variation>NFVHRGRPEPLDLHLGMFLPTLLHQATAEQQERFFMPAWNLE</variation>
    <location>
        <begin position="90"/>
        <end position="131"/>
    </location>
</feature>
<feature type="sequence conflict" description="In Ref. 1; CAH90691." evidence="6" ref="1">
    <original>F</original>
    <variation>L</variation>
    <location>
        <position position="284"/>
    </location>
</feature>
<accession>Q5RC19</accession>
<accession>Q5R8F0</accession>
<gene>
    <name evidence="2" type="primary">ACOX1</name>
</gene>
<sequence length="660" mass="74454">MNPDLRRERDSASFNPELLTHILDGSPEKTRRRREIENMILNDPDFQHEDLNFLTRSQRYEVAVRKSAIMVKKMREFGIADPDEIMWFKKLHLVNFVEPVGLNYSMFIPTLLNQGTTAQKEKWLLSSKGLQIIGTYAQTEMGHGTHLRGLETTATYDPETQEFILNSPTVTSIKWWPGGLGKTSNHAIVLAQLITKGKGYGLHAFIVPIREIGTHKPLPGITVGDIGPKFGYDEIDNGYLKMDNYRIPRENMLMKYAQVKPDGTYVKPLSNKLTYGTMVFVRSFLVGEAARALSKACTIAIRYSAVRHQSEIKPGEPEPQILDFQTQQYKLFPLLATAYAFQFVGAYMKETYHRINEGIGQGDLSELPELHALTAGLKAFTSWTANTGIEACRMACGGHGYSHCSGLPNIYVNFTPSCTFEGENTVMMLQTARFLMKSYDQVHSGKLVCGMVSYLNDLPSQRIQPQQVAVWPTMVDIHSPESLTEAYKLRAARLVEIAAKNLQKEVIHRKSKEVAWNLTSVDLVRASEAHCHYVVVKLFSEKLLKIQDKAIQAVLRNLCLLYSLYGISQNAGDFLQGSIMTEPQITQVNQRVKELLTLIRSDAVALVDAFDFQDVTLGSVLGRYDGNVYENLFEWAKNSPLNKAEVHESYKHLKSLQSKL</sequence>